<protein>
    <recommendedName>
        <fullName>Neurotrophin-3</fullName>
        <shortName>NT-3</shortName>
    </recommendedName>
</protein>
<reference key="1">
    <citation type="journal article" date="2006" name="Mol. Phylogenet. Evol.">
        <title>Dispersal and vicariance: the complex evolutionary history of boid snakes.</title>
        <authorList>
            <person name="Noonan B.P."/>
            <person name="Chippindale P.T."/>
        </authorList>
    </citation>
    <scope>NUCLEOTIDE SEQUENCE [GENOMIC DNA]</scope>
</reference>
<comment type="function">
    <text evidence="1">Seems to promote the survival of visceral and proprioceptive sensory neurons.</text>
</comment>
<comment type="subcellular location">
    <subcellularLocation>
        <location evidence="1">Secreted</location>
    </subcellularLocation>
</comment>
<comment type="similarity">
    <text evidence="3">Belongs to the NGF-beta family.</text>
</comment>
<name>NTF3_EPICE</name>
<sequence>IQSTSMDQGILTEDSMNSFIRTLIQAGIWKNKVPKQMARTKDGTQTTVKKTEAEADAMASQDTRLGFQPIVSVDAELLRQQRRFSSPRVLLSENTPLEPPPLYLTEEPVVLNRTSRRKREGKSHRGEYSVCDSESRWVTDKSSAVDIRGHQVTVLGEIRMGPS</sequence>
<dbReference type="EMBL" id="AY988045">
    <property type="protein sequence ID" value="AAY44252.1"/>
    <property type="molecule type" value="Genomic_DNA"/>
</dbReference>
<dbReference type="SMR" id="Q1X6Z3"/>
<dbReference type="GlyCosmos" id="Q1X6Z3">
    <property type="glycosylation" value="1 site, No reported glycans"/>
</dbReference>
<dbReference type="GO" id="GO:0030424">
    <property type="term" value="C:axon"/>
    <property type="evidence" value="ECO:0007669"/>
    <property type="project" value="TreeGrafter"/>
</dbReference>
<dbReference type="GO" id="GO:0030425">
    <property type="term" value="C:dendrite"/>
    <property type="evidence" value="ECO:0007669"/>
    <property type="project" value="TreeGrafter"/>
</dbReference>
<dbReference type="GO" id="GO:0005615">
    <property type="term" value="C:extracellular space"/>
    <property type="evidence" value="ECO:0007669"/>
    <property type="project" value="TreeGrafter"/>
</dbReference>
<dbReference type="GO" id="GO:0008021">
    <property type="term" value="C:synaptic vesicle"/>
    <property type="evidence" value="ECO:0007669"/>
    <property type="project" value="TreeGrafter"/>
</dbReference>
<dbReference type="GO" id="GO:0008083">
    <property type="term" value="F:growth factor activity"/>
    <property type="evidence" value="ECO:0007669"/>
    <property type="project" value="UniProtKB-KW"/>
</dbReference>
<dbReference type="GO" id="GO:0005163">
    <property type="term" value="F:nerve growth factor receptor binding"/>
    <property type="evidence" value="ECO:0007669"/>
    <property type="project" value="TreeGrafter"/>
</dbReference>
<dbReference type="GO" id="GO:0007169">
    <property type="term" value="P:cell surface receptor protein tyrosine kinase signaling pathway"/>
    <property type="evidence" value="ECO:0007669"/>
    <property type="project" value="TreeGrafter"/>
</dbReference>
<dbReference type="GO" id="GO:0050804">
    <property type="term" value="P:modulation of chemical synaptic transmission"/>
    <property type="evidence" value="ECO:0007669"/>
    <property type="project" value="TreeGrafter"/>
</dbReference>
<dbReference type="GO" id="GO:0043524">
    <property type="term" value="P:negative regulation of neuron apoptotic process"/>
    <property type="evidence" value="ECO:0007669"/>
    <property type="project" value="TreeGrafter"/>
</dbReference>
<dbReference type="GO" id="GO:0021675">
    <property type="term" value="P:nerve development"/>
    <property type="evidence" value="ECO:0007669"/>
    <property type="project" value="TreeGrafter"/>
</dbReference>
<dbReference type="GO" id="GO:0038180">
    <property type="term" value="P:nerve growth factor signaling pathway"/>
    <property type="evidence" value="ECO:0007669"/>
    <property type="project" value="TreeGrafter"/>
</dbReference>
<dbReference type="GO" id="GO:0048812">
    <property type="term" value="P:neuron projection morphogenesis"/>
    <property type="evidence" value="ECO:0007669"/>
    <property type="project" value="TreeGrafter"/>
</dbReference>
<dbReference type="Gene3D" id="2.10.90.10">
    <property type="entry name" value="Cystine-knot cytokines"/>
    <property type="match status" value="1"/>
</dbReference>
<dbReference type="InterPro" id="IPR029034">
    <property type="entry name" value="Cystine-knot_cytokine"/>
</dbReference>
<dbReference type="InterPro" id="IPR020408">
    <property type="entry name" value="Nerve_growth_factor-like"/>
</dbReference>
<dbReference type="InterPro" id="IPR002072">
    <property type="entry name" value="Nerve_growth_factor-rel"/>
</dbReference>
<dbReference type="InterPro" id="IPR015578">
    <property type="entry name" value="Neurotrophin-3"/>
</dbReference>
<dbReference type="InterPro" id="IPR045815">
    <property type="entry name" value="NTF3_N"/>
</dbReference>
<dbReference type="PANTHER" id="PTHR11589">
    <property type="entry name" value="NERVE GROWTH FACTOR NGF -RELATED"/>
    <property type="match status" value="1"/>
</dbReference>
<dbReference type="PANTHER" id="PTHR11589:SF4">
    <property type="entry name" value="NEUROTROPHIN-3"/>
    <property type="match status" value="1"/>
</dbReference>
<dbReference type="Pfam" id="PF00243">
    <property type="entry name" value="NGF"/>
    <property type="match status" value="1"/>
</dbReference>
<dbReference type="Pfam" id="PF19338">
    <property type="entry name" value="NTF3_N"/>
    <property type="match status" value="1"/>
</dbReference>
<dbReference type="PIRSF" id="PIRSF001789">
    <property type="entry name" value="NGF"/>
    <property type="match status" value="1"/>
</dbReference>
<dbReference type="PRINTS" id="PR01914">
    <property type="entry name" value="NEUROTROPHN3"/>
</dbReference>
<dbReference type="SMART" id="SM00140">
    <property type="entry name" value="NGF"/>
    <property type="match status" value="1"/>
</dbReference>
<dbReference type="SUPFAM" id="SSF57501">
    <property type="entry name" value="Cystine-knot cytokines"/>
    <property type="match status" value="1"/>
</dbReference>
<dbReference type="PROSITE" id="PS50270">
    <property type="entry name" value="NGF_2"/>
    <property type="match status" value="1"/>
</dbReference>
<organism>
    <name type="scientific">Epicrates cenchria</name>
    <name type="common">Rainbow boa</name>
    <name type="synonym">Boa cenchria</name>
    <dbReference type="NCBI Taxonomy" id="51743"/>
    <lineage>
        <taxon>Eukaryota</taxon>
        <taxon>Metazoa</taxon>
        <taxon>Chordata</taxon>
        <taxon>Craniata</taxon>
        <taxon>Vertebrata</taxon>
        <taxon>Euteleostomi</taxon>
        <taxon>Lepidosauria</taxon>
        <taxon>Squamata</taxon>
        <taxon>Bifurcata</taxon>
        <taxon>Unidentata</taxon>
        <taxon>Episquamata</taxon>
        <taxon>Toxicofera</taxon>
        <taxon>Serpentes</taxon>
        <taxon>Henophidia</taxon>
        <taxon>Boidae</taxon>
        <taxon>Boinae</taxon>
        <taxon>Epicrates</taxon>
    </lineage>
</organism>
<accession>Q1X6Z3</accession>
<gene>
    <name type="primary">NTF3</name>
</gene>
<evidence type="ECO:0000250" key="1"/>
<evidence type="ECO:0000255" key="2"/>
<evidence type="ECO:0000305" key="3"/>
<feature type="signal peptide" evidence="2">
    <location>
        <begin position="1" status="less than"/>
        <end position="3"/>
    </location>
</feature>
<feature type="propeptide" id="PRO_0000346725" evidence="1">
    <location>
        <begin position="4"/>
        <end position="119"/>
    </location>
</feature>
<feature type="chain" id="PRO_0000346726" description="Neurotrophin-3">
    <location>
        <begin position="120"/>
        <end position="163" status="greater than"/>
    </location>
</feature>
<feature type="glycosylation site" description="N-linked (GlcNAc...) asparagine" evidence="2">
    <location>
        <position position="112"/>
    </location>
</feature>
<feature type="non-terminal residue">
    <location>
        <position position="1"/>
    </location>
</feature>
<feature type="non-terminal residue">
    <location>
        <position position="163"/>
    </location>
</feature>
<keyword id="KW-0165">Cleavage on pair of basic residues</keyword>
<keyword id="KW-0325">Glycoprotein</keyword>
<keyword id="KW-0339">Growth factor</keyword>
<keyword id="KW-0964">Secreted</keyword>
<keyword id="KW-0732">Signal</keyword>
<proteinExistence type="inferred from homology"/>